<proteinExistence type="evidence at protein level"/>
<protein>
    <recommendedName>
        <fullName evidence="1">DNA gyrase subunit B</fullName>
        <ecNumber evidence="1 3 4">5.6.2.2</ecNumber>
    </recommendedName>
</protein>
<comment type="function">
    <text evidence="3 4">A type II topoisomerase that negatively supercoils DNA in an ATP-dependent manner (PubMed:276855). About 140 bp of DNA wraps around gyrase in the presence or absence of ATP, when ATP is added negative supercoils are made (PubMed:153201).</text>
</comment>
<comment type="function">
    <text evidence="1">A type II topoisomerase that negatively supercoils closed circular double-stranded (ds) DNA in an ATP-dependent manner to modulate DNA topology and maintain chromosomes in an underwound state. Negative supercoiling favors strand separation, and DNA replication, transcription, recombination and repair, all of which involve strand separation. Also able to catalyze the interconversion of other topological isomers of dsDNA rings, including catenanes and knotted rings. Type II topoisomerases break and join 2 DNA strands simultaneously in an ATP-dependent manner.</text>
</comment>
<comment type="catalytic activity">
    <reaction evidence="1 3 4">
        <text>ATP-dependent breakage, passage and rejoining of double-stranded DNA.</text>
        <dbReference type="EC" id="5.6.2.2"/>
    </reaction>
</comment>
<comment type="cofactor">
    <cofactor evidence="1 4">
        <name>Mg(2+)</name>
        <dbReference type="ChEBI" id="CHEBI:18420"/>
    </cofactor>
    <cofactor evidence="1">
        <name>Mn(2+)</name>
        <dbReference type="ChEBI" id="CHEBI:29035"/>
    </cofactor>
    <cofactor evidence="1">
        <name>Ca(2+)</name>
        <dbReference type="ChEBI" id="CHEBI:29108"/>
    </cofactor>
    <text evidence="1">Binds two Mg(2+) per subunit. The magnesium ions form salt bridges with both the protein and the DNA. Can also accept other divalent metal cations, such as Mn(2+) or Ca(2+).</text>
</comment>
<comment type="activity regulation">
    <text evidence="3 4">Supercoiling activity inhibited by novobiocin and coumermycin, DNA wrapping around gyrase is not inhibited (PubMed:153201, PubMed:276855).</text>
</comment>
<comment type="subunit">
    <text evidence="1 3 4">Heterotetramer, composed of two GyrA and two GyrB chains (PubMed:153201, PubMed:276855). In the heterotetramer, GyrA contains the active site tyrosine that forms a transient covalent intermediate with the DNA, while GyrB binds cofactors and catalyzes ATP hydrolysis.</text>
</comment>
<comment type="subcellular location">
    <subcellularLocation>
        <location evidence="1 4">Cytoplasm</location>
    </subcellularLocation>
</comment>
<comment type="miscellaneous">
    <text evidence="1">Few gyrases are as efficient as E.coli at forming negative supercoils. Not all organisms have 2 type II topoisomerases; in organisms with a single type II topoisomerase this enzyme also has to decatenate newly replicated chromosomes.</text>
</comment>
<comment type="similarity">
    <text evidence="1">Belongs to the type II topoisomerase GyrB family.</text>
</comment>
<reference key="1">
    <citation type="journal article" date="2010" name="J. Bacteriol.">
        <title>Genome sequence of the Fleming strain of Micrococcus luteus, a simple free-living actinobacterium.</title>
        <authorList>
            <person name="Young M."/>
            <person name="Artsatbanov V."/>
            <person name="Beller H.R."/>
            <person name="Chandra G."/>
            <person name="Chater K.F."/>
            <person name="Dover L.G."/>
            <person name="Goh E.B."/>
            <person name="Kahan T."/>
            <person name="Kaprelyants A.S."/>
            <person name="Kyrpides N."/>
            <person name="Lapidus A."/>
            <person name="Lowry S.R."/>
            <person name="Lykidis A."/>
            <person name="Mahillon J."/>
            <person name="Markowitz V."/>
            <person name="Mavromatis K."/>
            <person name="Mukamolova G.V."/>
            <person name="Oren A."/>
            <person name="Rokem J.S."/>
            <person name="Smith M.C."/>
            <person name="Young D.I."/>
            <person name="Greenblatt C.L."/>
        </authorList>
    </citation>
    <scope>NUCLEOTIDE SEQUENCE [LARGE SCALE GENOMIC DNA]</scope>
    <source>
        <strain>ATCC 4698 / DSM 20030 / JCM 1464 / CCM 169 / CCUG 5858 / IAM 1056 / NBRC 3333 / NCIMB 9278 / NCTC 2665 / VKM Ac-2230</strain>
    </source>
</reference>
<reference key="2">
    <citation type="journal article" date="1978" name="Proc. Natl. Acad. Sci. U.S.A.">
        <title>Micrococcus luteus DNA gyrase: active components and a model for its supercoiling of DNA.</title>
        <authorList>
            <person name="Liu L.F."/>
            <person name="Wang J.C."/>
        </authorList>
    </citation>
    <scope>FUNCTION IN NEGATIVE SUPERCOILING</scope>
    <scope>CATALYTIC ACTIVITY</scope>
    <scope>COFACTOR</scope>
    <scope>ACTIVITY REGULATION</scope>
    <scope>SUBUNIT</scope>
    <scope>SUBCELLULAR LOCATION</scope>
    <scope>DNA-BINDING</scope>
</reference>
<reference key="3">
    <citation type="journal article" date="1978" name="Cell">
        <title>DNA-DNA gyrase complex: the wrapping of the DNA duplex outside the enzyme.</title>
        <authorList>
            <person name="Liu L.F."/>
            <person name="Wang J.C."/>
        </authorList>
    </citation>
    <scope>FUNCTION</scope>
    <scope>CATALYTIC ACTIVITY</scope>
    <scope>ACTIVITY REGULATION</scope>
    <scope>SUBUNIT</scope>
    <scope>DNA-BINDING</scope>
</reference>
<name>GYRB_MICLC</name>
<sequence length="720" mass="78896">MVDAMPENPAEEPTAASAAPNPEAVPDAVGQPEAPVKDRKVPGEYGASAITVLEGLEAVRKRPGMYIGSTGPRGLHHLVYEVVDNSVDEALAGYATGIDVTLQADGGVRVADDGRGIPVDLHPTEGRPTVEVVMTILHAGGKFGGGGYAVSGGLHGVGISVVNALSRRVDTEVRRQGHVWRMSFADGGVPQGELVKGEATDATGTVQTFYPDAEIFDSIEFDYETLRARFQQMAFLNKGLRITLTDERVQESNEVVDDEIAGEGAAGEDVAENGLAEDAEQEPQRRSVTYLYENGLLDYVQHLNSAKKVEYVHDDVIAFEAEDFSDGRSMAVEVAMQWTSAYSESVHTYANTINTHEGGTHEEGFRAALTSLVNRYAREKEILKPKEDNLSGEDIREGLTAVISVKLSEPQFEGQTKTKLGNSEARGFVSKAVTDHLGDWFERNPGPAKEIIRKAIMASHARLAARKARDNARRKSPLESFGMPGKLADCSSKDPERCEVYIVEGDSAGGSAKQGRNPETQAILPLRGKILNVERARLDKALGNAEIQSMITAFGTNIGEEFDISKLRYHKIVLMADADVDGQHITTLLLTVLFRYMRPLIEAGHVFLAQPPLYRIKWSNAPHDYVFSDEERDAAVEAGLAKGWRYPKDNGVQRYKGLGEMNYQELWDTTMDPEHRTLLQVTMEDAAAADAVFSMLMGEDVESRRTFIQQNAKDIRFLDV</sequence>
<evidence type="ECO:0000255" key="1">
    <source>
        <dbReference type="HAMAP-Rule" id="MF_01898"/>
    </source>
</evidence>
<evidence type="ECO:0000256" key="2">
    <source>
        <dbReference type="SAM" id="MobiDB-lite"/>
    </source>
</evidence>
<evidence type="ECO:0000269" key="3">
    <source>
    </source>
</evidence>
<evidence type="ECO:0000269" key="4">
    <source>
    </source>
</evidence>
<gene>
    <name evidence="1" type="primary">gyrB</name>
    <name type="ordered locus">Mlut_00050</name>
</gene>
<feature type="chain" id="PRO_0000435542" description="DNA gyrase subunit B">
    <location>
        <begin position="1"/>
        <end position="720"/>
    </location>
</feature>
<feature type="domain" description="Toprim" evidence="1">
    <location>
        <begin position="498"/>
        <end position="612"/>
    </location>
</feature>
<feature type="region of interest" description="Disordered" evidence="2">
    <location>
        <begin position="1"/>
        <end position="42"/>
    </location>
</feature>
<feature type="compositionally biased region" description="Low complexity" evidence="2">
    <location>
        <begin position="1"/>
        <end position="26"/>
    </location>
</feature>
<feature type="binding site" evidence="1">
    <location>
        <position position="504"/>
    </location>
    <ligand>
        <name>Mg(2+)</name>
        <dbReference type="ChEBI" id="CHEBI:18420"/>
        <label>1</label>
        <note>catalytic</note>
    </ligand>
</feature>
<feature type="binding site" evidence="1">
    <location>
        <position position="577"/>
    </location>
    <ligand>
        <name>Mg(2+)</name>
        <dbReference type="ChEBI" id="CHEBI:18420"/>
        <label>1</label>
        <note>catalytic</note>
    </ligand>
</feature>
<feature type="binding site" evidence="1">
    <location>
        <position position="577"/>
    </location>
    <ligand>
        <name>Mg(2+)</name>
        <dbReference type="ChEBI" id="CHEBI:18420"/>
        <label>2</label>
    </ligand>
</feature>
<feature type="binding site" evidence="1">
    <location>
        <position position="579"/>
    </location>
    <ligand>
        <name>Mg(2+)</name>
        <dbReference type="ChEBI" id="CHEBI:18420"/>
        <label>2</label>
    </ligand>
</feature>
<feature type="site" description="Interaction with DNA" evidence="1">
    <location>
        <position position="529"/>
    </location>
</feature>
<feature type="site" description="Interaction with DNA" evidence="1">
    <location>
        <position position="532"/>
    </location>
</feature>
<organism>
    <name type="scientific">Micrococcus luteus (strain ATCC 4698 / DSM 20030 / JCM 1464 / CCM 169 / CCUG 5858 / IAM 1056 / NBRC 3333 / NCIMB 9278 / NCTC 2665 / VKM Ac-2230)</name>
    <name type="common">Micrococcus lysodeikticus</name>
    <dbReference type="NCBI Taxonomy" id="465515"/>
    <lineage>
        <taxon>Bacteria</taxon>
        <taxon>Bacillati</taxon>
        <taxon>Actinomycetota</taxon>
        <taxon>Actinomycetes</taxon>
        <taxon>Micrococcales</taxon>
        <taxon>Micrococcaceae</taxon>
        <taxon>Micrococcus</taxon>
    </lineage>
</organism>
<dbReference type="EC" id="5.6.2.2" evidence="1 3 4"/>
<dbReference type="EMBL" id="CP001628">
    <property type="protein sequence ID" value="ACS29580.1"/>
    <property type="molecule type" value="Genomic_DNA"/>
</dbReference>
<dbReference type="RefSeq" id="WP_010079770.1">
    <property type="nucleotide sequence ID" value="NZ_CABC01000084.1"/>
</dbReference>
<dbReference type="SMR" id="C5C7X8"/>
<dbReference type="STRING" id="465515.Mlut_00050"/>
<dbReference type="EnsemblBacteria" id="ACS29580">
    <property type="protein sequence ID" value="ACS29580"/>
    <property type="gene ID" value="Mlut_00050"/>
</dbReference>
<dbReference type="KEGG" id="mlu:Mlut_00050"/>
<dbReference type="eggNOG" id="COG0187">
    <property type="taxonomic scope" value="Bacteria"/>
</dbReference>
<dbReference type="HOGENOM" id="CLU_006146_4_1_11"/>
<dbReference type="Proteomes" id="UP000000738">
    <property type="component" value="Chromosome"/>
</dbReference>
<dbReference type="GO" id="GO:0005694">
    <property type="term" value="C:chromosome"/>
    <property type="evidence" value="ECO:0007669"/>
    <property type="project" value="InterPro"/>
</dbReference>
<dbReference type="GO" id="GO:0005737">
    <property type="term" value="C:cytoplasm"/>
    <property type="evidence" value="ECO:0007669"/>
    <property type="project" value="UniProtKB-SubCell"/>
</dbReference>
<dbReference type="GO" id="GO:0005524">
    <property type="term" value="F:ATP binding"/>
    <property type="evidence" value="ECO:0007669"/>
    <property type="project" value="UniProtKB-UniRule"/>
</dbReference>
<dbReference type="GO" id="GO:0003677">
    <property type="term" value="F:DNA binding"/>
    <property type="evidence" value="ECO:0007669"/>
    <property type="project" value="UniProtKB-KW"/>
</dbReference>
<dbReference type="GO" id="GO:0034335">
    <property type="term" value="F:DNA negative supercoiling activity"/>
    <property type="evidence" value="ECO:0000314"/>
    <property type="project" value="UniProtKB"/>
</dbReference>
<dbReference type="GO" id="GO:0003918">
    <property type="term" value="F:DNA topoisomerase type II (double strand cut, ATP-hydrolyzing) activity"/>
    <property type="evidence" value="ECO:0000314"/>
    <property type="project" value="UniProtKB"/>
</dbReference>
<dbReference type="GO" id="GO:0046872">
    <property type="term" value="F:metal ion binding"/>
    <property type="evidence" value="ECO:0007669"/>
    <property type="project" value="UniProtKB-KW"/>
</dbReference>
<dbReference type="GO" id="GO:0006265">
    <property type="term" value="P:DNA topological change"/>
    <property type="evidence" value="ECO:0007669"/>
    <property type="project" value="UniProtKB-UniRule"/>
</dbReference>
<dbReference type="GO" id="GO:0006261">
    <property type="term" value="P:DNA-templated DNA replication"/>
    <property type="evidence" value="ECO:0007669"/>
    <property type="project" value="UniProtKB-UniRule"/>
</dbReference>
<dbReference type="CDD" id="cd16928">
    <property type="entry name" value="HATPase_GyrB-like"/>
    <property type="match status" value="1"/>
</dbReference>
<dbReference type="CDD" id="cd00822">
    <property type="entry name" value="TopoII_Trans_DNA_gyrase"/>
    <property type="match status" value="1"/>
</dbReference>
<dbReference type="CDD" id="cd03366">
    <property type="entry name" value="TOPRIM_TopoIIA_GyrB"/>
    <property type="match status" value="1"/>
</dbReference>
<dbReference type="FunFam" id="3.30.230.10:FF:000005">
    <property type="entry name" value="DNA gyrase subunit B"/>
    <property type="match status" value="1"/>
</dbReference>
<dbReference type="FunFam" id="3.30.565.10:FF:000002">
    <property type="entry name" value="DNA gyrase subunit B"/>
    <property type="match status" value="1"/>
</dbReference>
<dbReference type="FunFam" id="3.40.50.670:FF:000002">
    <property type="entry name" value="DNA gyrase subunit B"/>
    <property type="match status" value="1"/>
</dbReference>
<dbReference type="Gene3D" id="3.30.230.10">
    <property type="match status" value="1"/>
</dbReference>
<dbReference type="Gene3D" id="3.40.50.670">
    <property type="match status" value="1"/>
</dbReference>
<dbReference type="Gene3D" id="3.30.565.10">
    <property type="entry name" value="Histidine kinase-like ATPase, C-terminal domain"/>
    <property type="match status" value="1"/>
</dbReference>
<dbReference type="HAMAP" id="MF_01898">
    <property type="entry name" value="GyrB"/>
    <property type="match status" value="1"/>
</dbReference>
<dbReference type="InterPro" id="IPR002288">
    <property type="entry name" value="DNA_gyrase_B_C"/>
</dbReference>
<dbReference type="InterPro" id="IPR011557">
    <property type="entry name" value="GyrB"/>
</dbReference>
<dbReference type="InterPro" id="IPR036890">
    <property type="entry name" value="HATPase_C_sf"/>
</dbReference>
<dbReference type="InterPro" id="IPR020568">
    <property type="entry name" value="Ribosomal_Su5_D2-typ_SF"/>
</dbReference>
<dbReference type="InterPro" id="IPR014721">
    <property type="entry name" value="Ribsml_uS5_D2-typ_fold_subgr"/>
</dbReference>
<dbReference type="InterPro" id="IPR001241">
    <property type="entry name" value="Topo_IIA"/>
</dbReference>
<dbReference type="InterPro" id="IPR013760">
    <property type="entry name" value="Topo_IIA-like_dom_sf"/>
</dbReference>
<dbReference type="InterPro" id="IPR000565">
    <property type="entry name" value="Topo_IIA_B"/>
</dbReference>
<dbReference type="InterPro" id="IPR013759">
    <property type="entry name" value="Topo_IIA_B_C"/>
</dbReference>
<dbReference type="InterPro" id="IPR013506">
    <property type="entry name" value="Topo_IIA_bsu_dom2"/>
</dbReference>
<dbReference type="InterPro" id="IPR018522">
    <property type="entry name" value="TopoIIA_CS"/>
</dbReference>
<dbReference type="InterPro" id="IPR006171">
    <property type="entry name" value="TOPRIM_dom"/>
</dbReference>
<dbReference type="InterPro" id="IPR034160">
    <property type="entry name" value="TOPRIM_GyrB"/>
</dbReference>
<dbReference type="NCBIfam" id="TIGR01059">
    <property type="entry name" value="gyrB"/>
    <property type="match status" value="1"/>
</dbReference>
<dbReference type="NCBIfam" id="NF004189">
    <property type="entry name" value="PRK05644.1"/>
    <property type="match status" value="1"/>
</dbReference>
<dbReference type="PANTHER" id="PTHR45866:SF1">
    <property type="entry name" value="DNA GYRASE SUBUNIT B, MITOCHONDRIAL"/>
    <property type="match status" value="1"/>
</dbReference>
<dbReference type="PANTHER" id="PTHR45866">
    <property type="entry name" value="DNA GYRASE/TOPOISOMERASE SUBUNIT B"/>
    <property type="match status" value="1"/>
</dbReference>
<dbReference type="Pfam" id="PF00204">
    <property type="entry name" value="DNA_gyraseB"/>
    <property type="match status" value="1"/>
</dbReference>
<dbReference type="Pfam" id="PF00986">
    <property type="entry name" value="DNA_gyraseB_C"/>
    <property type="match status" value="1"/>
</dbReference>
<dbReference type="Pfam" id="PF02518">
    <property type="entry name" value="HATPase_c"/>
    <property type="match status" value="1"/>
</dbReference>
<dbReference type="Pfam" id="PF01751">
    <property type="entry name" value="Toprim"/>
    <property type="match status" value="1"/>
</dbReference>
<dbReference type="PRINTS" id="PR01159">
    <property type="entry name" value="DNAGYRASEB"/>
</dbReference>
<dbReference type="PRINTS" id="PR00418">
    <property type="entry name" value="TPI2FAMILY"/>
</dbReference>
<dbReference type="SMART" id="SM00387">
    <property type="entry name" value="HATPase_c"/>
    <property type="match status" value="1"/>
</dbReference>
<dbReference type="SMART" id="SM00433">
    <property type="entry name" value="TOP2c"/>
    <property type="match status" value="1"/>
</dbReference>
<dbReference type="SUPFAM" id="SSF55874">
    <property type="entry name" value="ATPase domain of HSP90 chaperone/DNA topoisomerase II/histidine kinase"/>
    <property type="match status" value="1"/>
</dbReference>
<dbReference type="SUPFAM" id="SSF54211">
    <property type="entry name" value="Ribosomal protein S5 domain 2-like"/>
    <property type="match status" value="1"/>
</dbReference>
<dbReference type="SUPFAM" id="SSF56719">
    <property type="entry name" value="Type II DNA topoisomerase"/>
    <property type="match status" value="1"/>
</dbReference>
<dbReference type="PROSITE" id="PS00177">
    <property type="entry name" value="TOPOISOMERASE_II"/>
    <property type="match status" value="1"/>
</dbReference>
<dbReference type="PROSITE" id="PS50880">
    <property type="entry name" value="TOPRIM"/>
    <property type="match status" value="1"/>
</dbReference>
<accession>C5C7X8</accession>
<keyword id="KW-0067">ATP-binding</keyword>
<keyword id="KW-0963">Cytoplasm</keyword>
<keyword id="KW-0238">DNA-binding</keyword>
<keyword id="KW-0413">Isomerase</keyword>
<keyword id="KW-0460">Magnesium</keyword>
<keyword id="KW-0479">Metal-binding</keyword>
<keyword id="KW-0547">Nucleotide-binding</keyword>
<keyword id="KW-1185">Reference proteome</keyword>
<keyword id="KW-0799">Topoisomerase</keyword>